<dbReference type="EMBL" id="CP000453">
    <property type="protein sequence ID" value="ABI55936.1"/>
    <property type="molecule type" value="Genomic_DNA"/>
</dbReference>
<dbReference type="RefSeq" id="WP_011628331.1">
    <property type="nucleotide sequence ID" value="NC_008340.1"/>
</dbReference>
<dbReference type="SMR" id="Q0AB51"/>
<dbReference type="KEGG" id="aeh:Mlg_0582"/>
<dbReference type="eggNOG" id="COG0360">
    <property type="taxonomic scope" value="Bacteria"/>
</dbReference>
<dbReference type="HOGENOM" id="CLU_113441_6_1_6"/>
<dbReference type="OrthoDB" id="9812702at2"/>
<dbReference type="Proteomes" id="UP000001962">
    <property type="component" value="Chromosome"/>
</dbReference>
<dbReference type="GO" id="GO:0022627">
    <property type="term" value="C:cytosolic small ribosomal subunit"/>
    <property type="evidence" value="ECO:0007669"/>
    <property type="project" value="TreeGrafter"/>
</dbReference>
<dbReference type="GO" id="GO:0070181">
    <property type="term" value="F:small ribosomal subunit rRNA binding"/>
    <property type="evidence" value="ECO:0007669"/>
    <property type="project" value="TreeGrafter"/>
</dbReference>
<dbReference type="GO" id="GO:0003735">
    <property type="term" value="F:structural constituent of ribosome"/>
    <property type="evidence" value="ECO:0007669"/>
    <property type="project" value="InterPro"/>
</dbReference>
<dbReference type="GO" id="GO:0006412">
    <property type="term" value="P:translation"/>
    <property type="evidence" value="ECO:0007669"/>
    <property type="project" value="UniProtKB-UniRule"/>
</dbReference>
<dbReference type="CDD" id="cd00473">
    <property type="entry name" value="bS6"/>
    <property type="match status" value="1"/>
</dbReference>
<dbReference type="Gene3D" id="3.30.70.60">
    <property type="match status" value="1"/>
</dbReference>
<dbReference type="HAMAP" id="MF_00360">
    <property type="entry name" value="Ribosomal_bS6"/>
    <property type="match status" value="1"/>
</dbReference>
<dbReference type="InterPro" id="IPR000529">
    <property type="entry name" value="Ribosomal_bS6"/>
</dbReference>
<dbReference type="InterPro" id="IPR020815">
    <property type="entry name" value="Ribosomal_bS6_CS"/>
</dbReference>
<dbReference type="InterPro" id="IPR035980">
    <property type="entry name" value="Ribosomal_bS6_sf"/>
</dbReference>
<dbReference type="InterPro" id="IPR020814">
    <property type="entry name" value="Ribosomal_S6_plastid/chlpt"/>
</dbReference>
<dbReference type="InterPro" id="IPR014717">
    <property type="entry name" value="Transl_elong_EF1B/ribsomal_bS6"/>
</dbReference>
<dbReference type="NCBIfam" id="TIGR00166">
    <property type="entry name" value="S6"/>
    <property type="match status" value="1"/>
</dbReference>
<dbReference type="PANTHER" id="PTHR21011">
    <property type="entry name" value="MITOCHONDRIAL 28S RIBOSOMAL PROTEIN S6"/>
    <property type="match status" value="1"/>
</dbReference>
<dbReference type="PANTHER" id="PTHR21011:SF1">
    <property type="entry name" value="SMALL RIBOSOMAL SUBUNIT PROTEIN BS6M"/>
    <property type="match status" value="1"/>
</dbReference>
<dbReference type="Pfam" id="PF01250">
    <property type="entry name" value="Ribosomal_S6"/>
    <property type="match status" value="1"/>
</dbReference>
<dbReference type="SUPFAM" id="SSF54995">
    <property type="entry name" value="Ribosomal protein S6"/>
    <property type="match status" value="1"/>
</dbReference>
<dbReference type="PROSITE" id="PS01048">
    <property type="entry name" value="RIBOSOMAL_S6"/>
    <property type="match status" value="1"/>
</dbReference>
<name>RS6_ALKEH</name>
<evidence type="ECO:0000255" key="1">
    <source>
        <dbReference type="HAMAP-Rule" id="MF_00360"/>
    </source>
</evidence>
<evidence type="ECO:0000256" key="2">
    <source>
        <dbReference type="SAM" id="MobiDB-lite"/>
    </source>
</evidence>
<evidence type="ECO:0000305" key="3"/>
<accession>Q0AB51</accession>
<reference key="1">
    <citation type="submission" date="2006-08" db="EMBL/GenBank/DDBJ databases">
        <title>Complete sequence of Alkalilimnicola ehrilichei MLHE-1.</title>
        <authorList>
            <person name="Copeland A."/>
            <person name="Lucas S."/>
            <person name="Lapidus A."/>
            <person name="Barry K."/>
            <person name="Detter J.C."/>
            <person name="Glavina del Rio T."/>
            <person name="Hammon N."/>
            <person name="Israni S."/>
            <person name="Dalin E."/>
            <person name="Tice H."/>
            <person name="Pitluck S."/>
            <person name="Sims D."/>
            <person name="Brettin T."/>
            <person name="Bruce D."/>
            <person name="Han C."/>
            <person name="Tapia R."/>
            <person name="Gilna P."/>
            <person name="Schmutz J."/>
            <person name="Larimer F."/>
            <person name="Land M."/>
            <person name="Hauser L."/>
            <person name="Kyrpides N."/>
            <person name="Mikhailova N."/>
            <person name="Oremland R.S."/>
            <person name="Hoeft S.E."/>
            <person name="Switzer-Blum J."/>
            <person name="Kulp T."/>
            <person name="King G."/>
            <person name="Tabita R."/>
            <person name="Witte B."/>
            <person name="Santini J.M."/>
            <person name="Basu P."/>
            <person name="Hollibaugh J.T."/>
            <person name="Xie G."/>
            <person name="Stolz J.F."/>
            <person name="Richardson P."/>
        </authorList>
    </citation>
    <scope>NUCLEOTIDE SEQUENCE [LARGE SCALE GENOMIC DNA]</scope>
    <source>
        <strain>ATCC BAA-1101 / DSM 17681 / MLHE-1</strain>
    </source>
</reference>
<gene>
    <name evidence="1" type="primary">rpsF</name>
    <name type="ordered locus">Mlg_0582</name>
</gene>
<protein>
    <recommendedName>
        <fullName evidence="1">Small ribosomal subunit protein bS6</fullName>
    </recommendedName>
    <alternativeName>
        <fullName evidence="3">30S ribosomal protein S6</fullName>
    </alternativeName>
</protein>
<keyword id="KW-1185">Reference proteome</keyword>
<keyword id="KW-0687">Ribonucleoprotein</keyword>
<keyword id="KW-0689">Ribosomal protein</keyword>
<keyword id="KW-0694">RNA-binding</keyword>
<keyword id="KW-0699">rRNA-binding</keyword>
<feature type="chain" id="PRO_1000005211" description="Small ribosomal subunit protein bS6">
    <location>
        <begin position="1"/>
        <end position="119"/>
    </location>
</feature>
<feature type="region of interest" description="Disordered" evidence="2">
    <location>
        <begin position="96"/>
        <end position="119"/>
    </location>
</feature>
<organism>
    <name type="scientific">Alkalilimnicola ehrlichii (strain ATCC BAA-1101 / DSM 17681 / MLHE-1)</name>
    <dbReference type="NCBI Taxonomy" id="187272"/>
    <lineage>
        <taxon>Bacteria</taxon>
        <taxon>Pseudomonadati</taxon>
        <taxon>Pseudomonadota</taxon>
        <taxon>Gammaproteobacteria</taxon>
        <taxon>Chromatiales</taxon>
        <taxon>Ectothiorhodospiraceae</taxon>
        <taxon>Alkalilimnicola</taxon>
    </lineage>
</organism>
<sequence length="119" mass="13717">MRHYEIVFMVHPDQSEQVPSMIERYTGIVESNGGKVHRLEDWGRRQLAYPINKLIKAHYVLMNVECGKDELDELESLFRFNDAVIRNMVLGRDEAVTEPSPLARSQEKDEEEGGRTAEA</sequence>
<comment type="function">
    <text evidence="1">Binds together with bS18 to 16S ribosomal RNA.</text>
</comment>
<comment type="similarity">
    <text evidence="1">Belongs to the bacterial ribosomal protein bS6 family.</text>
</comment>
<proteinExistence type="inferred from homology"/>